<protein>
    <recommendedName>
        <fullName evidence="1">Dol-P-Glc:Glc(2)Man(9)GlcNAc(2)-PP-Dol alpha-1,2-glucosyltransferase</fullName>
        <ecNumber evidence="1">2.4.1.256</ecNumber>
    </recommendedName>
    <alternativeName>
        <fullName>Alpha-1,2-glucosyltransferase ALG10-A</fullName>
    </alternativeName>
    <alternativeName>
        <fullName>Alpha-2-glucosyltransferase ALG10</fullName>
    </alternativeName>
    <alternativeName>
        <fullName>Asparagine-linked glycosylation protein 10</fullName>
    </alternativeName>
    <alternativeName>
        <fullName>Dolichyl-phosphoglucose-dependent glucosyltransferase ALG10</fullName>
    </alternativeName>
</protein>
<dbReference type="EC" id="2.4.1.256" evidence="1"/>
<dbReference type="EMBL" id="CM003157">
    <property type="protein sequence ID" value="KIS66556.1"/>
    <property type="molecule type" value="Genomic_DNA"/>
</dbReference>
<dbReference type="RefSeq" id="XP_011391859.1">
    <property type="nucleotide sequence ID" value="XM_011393557.1"/>
</dbReference>
<dbReference type="FunCoup" id="Q4P2W6">
    <property type="interactions" value="560"/>
</dbReference>
<dbReference type="STRING" id="237631.Q4P2W6"/>
<dbReference type="GlyCosmos" id="Q4P2W6">
    <property type="glycosylation" value="2 sites, No reported glycans"/>
</dbReference>
<dbReference type="EnsemblFungi" id="KIS66556">
    <property type="protein sequence ID" value="KIS66556"/>
    <property type="gene ID" value="UMAG_05547"/>
</dbReference>
<dbReference type="GeneID" id="23565408"/>
<dbReference type="KEGG" id="uma:UMAG_05547"/>
<dbReference type="VEuPathDB" id="FungiDB:UMAG_05547"/>
<dbReference type="eggNOG" id="KOG2642">
    <property type="taxonomic scope" value="Eukaryota"/>
</dbReference>
<dbReference type="HOGENOM" id="CLU_017053_1_0_1"/>
<dbReference type="InParanoid" id="Q4P2W6"/>
<dbReference type="OMA" id="HEMLEFR"/>
<dbReference type="OrthoDB" id="4769at2759"/>
<dbReference type="UniPathway" id="UPA00378"/>
<dbReference type="Proteomes" id="UP000000561">
    <property type="component" value="Chromosome 18"/>
</dbReference>
<dbReference type="GO" id="GO:0005783">
    <property type="term" value="C:endoplasmic reticulum"/>
    <property type="evidence" value="ECO:0000318"/>
    <property type="project" value="GO_Central"/>
</dbReference>
<dbReference type="GO" id="GO:0005789">
    <property type="term" value="C:endoplasmic reticulum membrane"/>
    <property type="evidence" value="ECO:0007669"/>
    <property type="project" value="UniProtKB-SubCell"/>
</dbReference>
<dbReference type="GO" id="GO:0106073">
    <property type="term" value="F:dolichyl pyrophosphate Glc2Man9GlcNAc2 alpha-1,2-glucosyltransferase activity"/>
    <property type="evidence" value="ECO:0000318"/>
    <property type="project" value="GO_Central"/>
</dbReference>
<dbReference type="GO" id="GO:0006488">
    <property type="term" value="P:dolichol-linked oligosaccharide biosynthetic process"/>
    <property type="evidence" value="ECO:0007669"/>
    <property type="project" value="InterPro"/>
</dbReference>
<dbReference type="GO" id="GO:0006487">
    <property type="term" value="P:protein N-linked glycosylation"/>
    <property type="evidence" value="ECO:0000318"/>
    <property type="project" value="GO_Central"/>
</dbReference>
<dbReference type="InterPro" id="IPR016900">
    <property type="entry name" value="Alg10"/>
</dbReference>
<dbReference type="PANTHER" id="PTHR12989">
    <property type="entry name" value="ALPHA-1,2-GLUCOSYLTRANSFERASE ALG10"/>
    <property type="match status" value="1"/>
</dbReference>
<dbReference type="PANTHER" id="PTHR12989:SF10">
    <property type="entry name" value="DOL-P-GLC:GLC(2)MAN(9)GLCNAC(2)-PP-DOL ALPHA-1,2-GLUCOSYLTRANSFERASE-RELATED"/>
    <property type="match status" value="1"/>
</dbReference>
<dbReference type="Pfam" id="PF04922">
    <property type="entry name" value="DIE2_ALG10"/>
    <property type="match status" value="2"/>
</dbReference>
<reference key="1">
    <citation type="journal article" date="2006" name="Nature">
        <title>Insights from the genome of the biotrophic fungal plant pathogen Ustilago maydis.</title>
        <authorList>
            <person name="Kaemper J."/>
            <person name="Kahmann R."/>
            <person name="Boelker M."/>
            <person name="Ma L.-J."/>
            <person name="Brefort T."/>
            <person name="Saville B.J."/>
            <person name="Banuett F."/>
            <person name="Kronstad J.W."/>
            <person name="Gold S.E."/>
            <person name="Mueller O."/>
            <person name="Perlin M.H."/>
            <person name="Woesten H.A.B."/>
            <person name="de Vries R."/>
            <person name="Ruiz-Herrera J."/>
            <person name="Reynaga-Pena C.G."/>
            <person name="Snetselaar K."/>
            <person name="McCann M."/>
            <person name="Perez-Martin J."/>
            <person name="Feldbruegge M."/>
            <person name="Basse C.W."/>
            <person name="Steinberg G."/>
            <person name="Ibeas J.I."/>
            <person name="Holloman W."/>
            <person name="Guzman P."/>
            <person name="Farman M.L."/>
            <person name="Stajich J.E."/>
            <person name="Sentandreu R."/>
            <person name="Gonzalez-Prieto J.M."/>
            <person name="Kennell J.C."/>
            <person name="Molina L."/>
            <person name="Schirawski J."/>
            <person name="Mendoza-Mendoza A."/>
            <person name="Greilinger D."/>
            <person name="Muench K."/>
            <person name="Roessel N."/>
            <person name="Scherer M."/>
            <person name="Vranes M."/>
            <person name="Ladendorf O."/>
            <person name="Vincon V."/>
            <person name="Fuchs U."/>
            <person name="Sandrock B."/>
            <person name="Meng S."/>
            <person name="Ho E.C.H."/>
            <person name="Cahill M.J."/>
            <person name="Boyce K.J."/>
            <person name="Klose J."/>
            <person name="Klosterman S.J."/>
            <person name="Deelstra H.J."/>
            <person name="Ortiz-Castellanos L."/>
            <person name="Li W."/>
            <person name="Sanchez-Alonso P."/>
            <person name="Schreier P.H."/>
            <person name="Haeuser-Hahn I."/>
            <person name="Vaupel M."/>
            <person name="Koopmann E."/>
            <person name="Friedrich G."/>
            <person name="Voss H."/>
            <person name="Schlueter T."/>
            <person name="Margolis J."/>
            <person name="Platt D."/>
            <person name="Swimmer C."/>
            <person name="Gnirke A."/>
            <person name="Chen F."/>
            <person name="Vysotskaia V."/>
            <person name="Mannhaupt G."/>
            <person name="Gueldener U."/>
            <person name="Muensterkoetter M."/>
            <person name="Haase D."/>
            <person name="Oesterheld M."/>
            <person name="Mewes H.-W."/>
            <person name="Mauceli E.W."/>
            <person name="DeCaprio D."/>
            <person name="Wade C.M."/>
            <person name="Butler J."/>
            <person name="Young S.K."/>
            <person name="Jaffe D.B."/>
            <person name="Calvo S.E."/>
            <person name="Nusbaum C."/>
            <person name="Galagan J.E."/>
            <person name="Birren B.W."/>
        </authorList>
    </citation>
    <scope>NUCLEOTIDE SEQUENCE [LARGE SCALE GENOMIC DNA]</scope>
    <source>
        <strain>DSM 14603 / FGSC 9021 / UM521</strain>
    </source>
</reference>
<reference key="2">
    <citation type="submission" date="2014-09" db="EMBL/GenBank/DDBJ databases">
        <authorList>
            <person name="Gueldener U."/>
            <person name="Muensterkoetter M."/>
            <person name="Walter M.C."/>
            <person name="Mannhaupt G."/>
            <person name="Kahmann R."/>
        </authorList>
    </citation>
    <scope>GENOME REANNOTATION</scope>
    <source>
        <strain>DSM 14603 / FGSC 9021 / UM521</strain>
    </source>
</reference>
<proteinExistence type="inferred from homology"/>
<accession>Q4P2W6</accession>
<accession>A0A0D1DRQ1</accession>
<sequence>MATSSSDRWPIPLKQHIPTLIFITVTVLTSNLVSRTQPTAYLDEIFHIPQAQQFCSALSSTSLFSAQQVWRQLTSVRYDAQLTTPPGMYAISVGMAKVLPGWECKDVVWLRSTNLVLLLTLPVLVARILGQIEEQARIASAAEDYSPSKTITQNLGKEITRHEIEMLQAKAKLQLPPTPSASHDDLAHIEPPTISIAQAALPAPTGSAAPLLRALKQREASAYTMALACTICFLPPLWFFGFLYYTDLASTWLVLAMLSLYNDLNTSNAHVAPTITGLLIALTSILAVAVRQTNIVWIGFAAAQATLSRVGKHVSHTQQGSDPVTQAIGMVKGAFGDNKKGWWTAVAINAAPMVPVLAVCVLFLRWNGSIVLGEKAAHQVALHLPQMGYFVAFALGFGLFPLLFSLQSMSHKAQDQGPSSSTLATFTHSVRSAVSALIDSTIASPGCILALAAALAGFYIAVDRFTIEHAYMLADNRHYTFYIWRKYRSSYAIPALDGMTIEPKLAVVPLFALALIAWSRALTHHAVNKRTGALFSLLFWMATAAVLVPTPLIEPRYFLMAYLLLRIYSHPYAPCEKQEKSAQLKWIYLALEAATYAAVNVITVGLFVNRPFQWPSHAVDVSRNEHTTMRFLW</sequence>
<feature type="chain" id="PRO_0000215461" description="Dol-P-Glc:Glc(2)Man(9)GlcNAc(2)-PP-Dol alpha-1,2-glucosyltransferase">
    <location>
        <begin position="1"/>
        <end position="633"/>
    </location>
</feature>
<feature type="transmembrane region" description="Helical" evidence="2">
    <location>
        <begin position="9"/>
        <end position="29"/>
    </location>
</feature>
<feature type="transmembrane region" description="Helical" evidence="2">
    <location>
        <begin position="112"/>
        <end position="132"/>
    </location>
</feature>
<feature type="transmembrane region" description="Helical" evidence="2">
    <location>
        <begin position="192"/>
        <end position="212"/>
    </location>
</feature>
<feature type="transmembrane region" description="Helical" evidence="2">
    <location>
        <begin position="225"/>
        <end position="245"/>
    </location>
</feature>
<feature type="transmembrane region" description="Helical" evidence="2">
    <location>
        <begin position="270"/>
        <end position="290"/>
    </location>
</feature>
<feature type="transmembrane region" description="Helical" evidence="2">
    <location>
        <begin position="344"/>
        <end position="364"/>
    </location>
</feature>
<feature type="transmembrane region" description="Helical" evidence="2">
    <location>
        <begin position="384"/>
        <end position="404"/>
    </location>
</feature>
<feature type="transmembrane region" description="Helical" evidence="2">
    <location>
        <begin position="442"/>
        <end position="462"/>
    </location>
</feature>
<feature type="transmembrane region" description="Helical" evidence="2">
    <location>
        <begin position="498"/>
        <end position="518"/>
    </location>
</feature>
<feature type="transmembrane region" description="Helical" evidence="2">
    <location>
        <begin position="533"/>
        <end position="553"/>
    </location>
</feature>
<feature type="transmembrane region" description="Helical" evidence="2">
    <location>
        <begin position="587"/>
        <end position="607"/>
    </location>
</feature>
<feature type="glycosylation site" description="N-linked (GlcNAc...) asparagine" evidence="2">
    <location>
        <position position="265"/>
    </location>
</feature>
<feature type="glycosylation site" description="N-linked (GlcNAc...) asparagine" evidence="2">
    <location>
        <position position="367"/>
    </location>
</feature>
<comment type="function">
    <text evidence="1">Dol-P-Glc:Glc(2)Man(9)GlcNAc(2)-PP-Dol alpha-1,2-glucosyltransferase that operates in the biosynthetic pathway of dolichol-linked oligosaccharides, the glycan precursors employed in protein asparagine (N)-glycosylation. The assembly of dolichol-linked oligosaccharides begins on the cytosolic side of the endoplasmic reticulum membrane and finishes in its lumen. The sequential addition of sugars to dolichol pyrophosphate produces dolichol-linked oligosaccharides containing fourteen sugars, including two GlcNAcs, nine mannoses and three glucoses. Once assembled, the oligosaccharide is transferred from the lipid to nascent proteins by oligosaccharyltransferases. In the lumen of the endoplasmic reticulum, adds the third and last glucose residue from dolichyl phosphate glucose (Dol-P-Glc) onto the lipid-linked oligosaccharide intermediate Glc(2)Man(9)GlcNAc(2)-PP-Dol to produce Glc(3)Man(9)GlcNAc(2)-PP-Dol.</text>
</comment>
<comment type="catalytic activity">
    <reaction evidence="1">
        <text>an alpha-D-Glc-(1-&gt;3)-alpha-D-Glc-(1-&gt;3)-alpha-D-Man-(1-&gt;2)-alpha-D-Man-(1-&gt;2)-alpha-D-Man-(1-&gt;3)-[alpha-D-Man-(1-&gt;2)-alpha-D-Man-(1-&gt;3)-[alpha-D-Man-(1-&gt;2)-alpha-D-Man-(1-&gt;6)]-alpha-D-Man-(1-&gt;6)]-beta-D-Man-(1-&gt;4)-beta-D-GlcNAc-(1-&gt;4)-alpha-D-GlcNAc-diphospho-di-trans,poly-cis-dolichol + a di-trans,poly-cis-dolichyl beta-D-glucosyl phosphate = a alpha-D-Glc-(1-&gt;2)-alpha-D-Glc-(1-&gt;3)-alpha-D-Glc-(1-&gt;3)-alpha-D-Man-(1-&gt;2)-alpha-D-Man-(1-&gt;2)-alpha-D-Man-(1-&gt;3)-[alpha-D-Man-(1-&gt;2)-alpha-D-Man-(1-&gt;3)-[alpha-D-Man-(1-&gt;2)-alpha-D-Man-(1-&gt;6)]-alpha-D-Man-(1-&gt;6)]-beta-D-Man-(1-&gt;4)-beta-D-GlcNAc-(1-&gt;4)-alpha-D-GlcNAc-diphospho-di-trans,poly-cis-dolichol + a di-trans,poly-cis-dolichyl phosphate + H(+)</text>
        <dbReference type="Rhea" id="RHEA:29543"/>
        <dbReference type="Rhea" id="RHEA-COMP:19498"/>
        <dbReference type="Rhea" id="RHEA-COMP:19502"/>
        <dbReference type="Rhea" id="RHEA-COMP:19512"/>
        <dbReference type="Rhea" id="RHEA-COMP:19522"/>
        <dbReference type="ChEBI" id="CHEBI:15378"/>
        <dbReference type="ChEBI" id="CHEBI:57525"/>
        <dbReference type="ChEBI" id="CHEBI:57683"/>
        <dbReference type="ChEBI" id="CHEBI:132522"/>
        <dbReference type="ChEBI" id="CHEBI:132523"/>
        <dbReference type="EC" id="2.4.1.256"/>
    </reaction>
    <physiologicalReaction direction="left-to-right" evidence="1">
        <dbReference type="Rhea" id="RHEA:29544"/>
    </physiologicalReaction>
</comment>
<comment type="pathway">
    <text evidence="1">Protein modification; protein glycosylation.</text>
</comment>
<comment type="subcellular location">
    <subcellularLocation>
        <location evidence="1">Endoplasmic reticulum membrane</location>
        <topology evidence="2">Multi-pass membrane protein</topology>
    </subcellularLocation>
</comment>
<comment type="similarity">
    <text evidence="3">Belongs to the ALG10 glucosyltransferase family.</text>
</comment>
<organism>
    <name type="scientific">Mycosarcoma maydis</name>
    <name type="common">Corn smut fungus</name>
    <name type="synonym">Ustilago maydis</name>
    <dbReference type="NCBI Taxonomy" id="5270"/>
    <lineage>
        <taxon>Eukaryota</taxon>
        <taxon>Fungi</taxon>
        <taxon>Dikarya</taxon>
        <taxon>Basidiomycota</taxon>
        <taxon>Ustilaginomycotina</taxon>
        <taxon>Ustilaginomycetes</taxon>
        <taxon>Ustilaginales</taxon>
        <taxon>Ustilaginaceae</taxon>
        <taxon>Mycosarcoma</taxon>
    </lineage>
</organism>
<keyword id="KW-0256">Endoplasmic reticulum</keyword>
<keyword id="KW-0325">Glycoprotein</keyword>
<keyword id="KW-0328">Glycosyltransferase</keyword>
<keyword id="KW-0472">Membrane</keyword>
<keyword id="KW-1185">Reference proteome</keyword>
<keyword id="KW-0808">Transferase</keyword>
<keyword id="KW-0812">Transmembrane</keyword>
<keyword id="KW-1133">Transmembrane helix</keyword>
<name>ALG10_MYCMD</name>
<gene>
    <name type="primary">ALG10</name>
    <name type="ORF">UMAG_05547</name>
</gene>
<evidence type="ECO:0000250" key="1">
    <source>
        <dbReference type="UniProtKB" id="P50076"/>
    </source>
</evidence>
<evidence type="ECO:0000255" key="2"/>
<evidence type="ECO:0000305" key="3"/>